<gene>
    <name type="primary">ctnC</name>
    <name type="ORF">DDB_G0276479</name>
</gene>
<feature type="signal peptide" evidence="2">
    <location>
        <begin position="1"/>
        <end position="20"/>
    </location>
</feature>
<feature type="chain" id="PRO_0000327910" description="Countin-3">
    <location>
        <begin position="21"/>
        <end position="222"/>
    </location>
</feature>
<feature type="domain" description="Saposin B-type" evidence="3">
    <location>
        <begin position="21"/>
        <end position="105"/>
    </location>
</feature>
<feature type="glycosylation site" description="N-linked (GlcNAc...) asparagine" evidence="3">
    <location>
        <position position="108"/>
    </location>
</feature>
<feature type="glycosylation site" description="N-linked (GlcNAc...) asparagine" evidence="3">
    <location>
        <position position="134"/>
    </location>
</feature>
<feature type="glycosylation site" description="N-linked (GlcNAc...) asparagine" evidence="3">
    <location>
        <position position="218"/>
    </location>
</feature>
<feature type="disulfide bond" evidence="3">
    <location>
        <begin position="25"/>
        <end position="101"/>
    </location>
</feature>
<feature type="disulfide bond" evidence="3">
    <location>
        <begin position="28"/>
        <end position="95"/>
    </location>
</feature>
<feature type="disulfide bond" evidence="3">
    <location>
        <begin position="56"/>
        <end position="68"/>
    </location>
</feature>
<organism>
    <name type="scientific">Dictyostelium discoideum</name>
    <name type="common">Social amoeba</name>
    <dbReference type="NCBI Taxonomy" id="44689"/>
    <lineage>
        <taxon>Eukaryota</taxon>
        <taxon>Amoebozoa</taxon>
        <taxon>Evosea</taxon>
        <taxon>Eumycetozoa</taxon>
        <taxon>Dictyostelia</taxon>
        <taxon>Dictyosteliales</taxon>
        <taxon>Dictyosteliaceae</taxon>
        <taxon>Dictyostelium</taxon>
    </lineage>
</organism>
<reference key="1">
    <citation type="journal article" date="2002" name="J. Biochem. Mol. Biol. Biophys.">
        <title>Identification of the homolog of cell-counting factor in the cellular slime mold Dictyostelium discoideum.</title>
        <authorList>
            <person name="Okuwa T."/>
            <person name="Katayama T."/>
            <person name="Takano A."/>
            <person name="Yasukawa H."/>
        </authorList>
    </citation>
    <scope>NUCLEOTIDE SEQUENCE [GENOMIC DNA]</scope>
    <scope>DEVELOPMENTAL STAGE</scope>
</reference>
<reference key="2">
    <citation type="journal article" date="2002" name="Nature">
        <title>Sequence and analysis of chromosome 2 of Dictyostelium discoideum.</title>
        <authorList>
            <person name="Gloeckner G."/>
            <person name="Eichinger L."/>
            <person name="Szafranski K."/>
            <person name="Pachebat J.A."/>
            <person name="Bankier A.T."/>
            <person name="Dear P.H."/>
            <person name="Lehmann R."/>
            <person name="Baumgart C."/>
            <person name="Parra G."/>
            <person name="Abril J.F."/>
            <person name="Guigo R."/>
            <person name="Kumpf K."/>
            <person name="Tunggal B."/>
            <person name="Cox E.C."/>
            <person name="Quail M.A."/>
            <person name="Platzer M."/>
            <person name="Rosenthal A."/>
            <person name="Noegel A.A."/>
        </authorList>
    </citation>
    <scope>NUCLEOTIDE SEQUENCE [LARGE SCALE GENOMIC DNA]</scope>
    <source>
        <strain>AX4</strain>
    </source>
</reference>
<reference key="3">
    <citation type="journal article" date="2005" name="Nature">
        <title>The genome of the social amoeba Dictyostelium discoideum.</title>
        <authorList>
            <person name="Eichinger L."/>
            <person name="Pachebat J.A."/>
            <person name="Gloeckner G."/>
            <person name="Rajandream M.A."/>
            <person name="Sucgang R."/>
            <person name="Berriman M."/>
            <person name="Song J."/>
            <person name="Olsen R."/>
            <person name="Szafranski K."/>
            <person name="Xu Q."/>
            <person name="Tunggal B."/>
            <person name="Kummerfeld S."/>
            <person name="Madera M."/>
            <person name="Konfortov B.A."/>
            <person name="Rivero F."/>
            <person name="Bankier A.T."/>
            <person name="Lehmann R."/>
            <person name="Hamlin N."/>
            <person name="Davies R."/>
            <person name="Gaudet P."/>
            <person name="Fey P."/>
            <person name="Pilcher K."/>
            <person name="Chen G."/>
            <person name="Saunders D."/>
            <person name="Sodergren E.J."/>
            <person name="Davis P."/>
            <person name="Kerhornou A."/>
            <person name="Nie X."/>
            <person name="Hall N."/>
            <person name="Anjard C."/>
            <person name="Hemphill L."/>
            <person name="Bason N."/>
            <person name="Farbrother P."/>
            <person name="Desany B."/>
            <person name="Just E."/>
            <person name="Morio T."/>
            <person name="Rost R."/>
            <person name="Churcher C.M."/>
            <person name="Cooper J."/>
            <person name="Haydock S."/>
            <person name="van Driessche N."/>
            <person name="Cronin A."/>
            <person name="Goodhead I."/>
            <person name="Muzny D.M."/>
            <person name="Mourier T."/>
            <person name="Pain A."/>
            <person name="Lu M."/>
            <person name="Harper D."/>
            <person name="Lindsay R."/>
            <person name="Hauser H."/>
            <person name="James K.D."/>
            <person name="Quiles M."/>
            <person name="Madan Babu M."/>
            <person name="Saito T."/>
            <person name="Buchrieser C."/>
            <person name="Wardroper A."/>
            <person name="Felder M."/>
            <person name="Thangavelu M."/>
            <person name="Johnson D."/>
            <person name="Knights A."/>
            <person name="Loulseged H."/>
            <person name="Mungall K.L."/>
            <person name="Oliver K."/>
            <person name="Price C."/>
            <person name="Quail M.A."/>
            <person name="Urushihara H."/>
            <person name="Hernandez J."/>
            <person name="Rabbinowitsch E."/>
            <person name="Steffen D."/>
            <person name="Sanders M."/>
            <person name="Ma J."/>
            <person name="Kohara Y."/>
            <person name="Sharp S."/>
            <person name="Simmonds M.N."/>
            <person name="Spiegler S."/>
            <person name="Tivey A."/>
            <person name="Sugano S."/>
            <person name="White B."/>
            <person name="Walker D."/>
            <person name="Woodward J.R."/>
            <person name="Winckler T."/>
            <person name="Tanaka Y."/>
            <person name="Shaulsky G."/>
            <person name="Schleicher M."/>
            <person name="Weinstock G.M."/>
            <person name="Rosenthal A."/>
            <person name="Cox E.C."/>
            <person name="Chisholm R.L."/>
            <person name="Gibbs R.A."/>
            <person name="Loomis W.F."/>
            <person name="Platzer M."/>
            <person name="Kay R.R."/>
            <person name="Williams J.G."/>
            <person name="Dear P.H."/>
            <person name="Noegel A.A."/>
            <person name="Barrell B.G."/>
            <person name="Kuspa A."/>
        </authorList>
    </citation>
    <scope>NUCLEOTIDE SEQUENCE [LARGE SCALE GENOMIC DNA]</scope>
    <source>
        <strain>AX4</strain>
    </source>
</reference>
<keyword id="KW-1015">Disulfide bond</keyword>
<keyword id="KW-0325">Glycoprotein</keyword>
<keyword id="KW-1185">Reference proteome</keyword>
<keyword id="KW-0964">Secreted</keyword>
<keyword id="KW-0732">Signal</keyword>
<accession>Q86HV8</accession>
<accession>Q551J9</accession>
<comment type="function">
    <text evidence="1">May control the size of the multicellular structure.</text>
</comment>
<comment type="subcellular location">
    <subcellularLocation>
        <location evidence="1">Secreted</location>
    </subcellularLocation>
</comment>
<comment type="developmental stage">
    <text evidence="4">Expressed in the vegetative cells, decreases in the aggregating stage, increases in the mid-developmental stage and decreases again in subsequent stages.</text>
</comment>
<comment type="similarity">
    <text evidence="5">Belongs to the countin family.</text>
</comment>
<sequence>MNKILSLFLITILLISKVMSSSEECKLCTDFMYDSLNELIEIAINGGVIGSCGALCNKLGIAPLCMVCAIACDAVGINGFMDLLQDVFPDPIYICESVKMCQYNDKANATITEVVINPMSGNVGDTFKIGVSFNVTNTIATGEILWNVVDPRGFQFGETEVIIDAAPSIYGAAFSFQATPSEQEEFPPGEYQLQMQICEGTCGSPHPHSYILSNQYLNFTII</sequence>
<name>CTNC_DICDI</name>
<evidence type="ECO:0000250" key="1"/>
<evidence type="ECO:0000255" key="2"/>
<evidence type="ECO:0000255" key="3">
    <source>
        <dbReference type="PROSITE-ProRule" id="PRU00415"/>
    </source>
</evidence>
<evidence type="ECO:0000269" key="4">
    <source>
    </source>
</evidence>
<evidence type="ECO:0000305" key="5"/>
<proteinExistence type="evidence at transcript level"/>
<protein>
    <recommendedName>
        <fullName>Countin-3</fullName>
    </recommendedName>
</protein>
<dbReference type="EMBL" id="AB211530">
    <property type="protein sequence ID" value="BAD98303.1"/>
    <property type="molecule type" value="Genomic_DNA"/>
</dbReference>
<dbReference type="EMBL" id="AAFI02000015">
    <property type="protein sequence ID" value="EAL69193.1"/>
    <property type="molecule type" value="Genomic_DNA"/>
</dbReference>
<dbReference type="RefSeq" id="XP_643135.1">
    <property type="nucleotide sequence ID" value="XM_638043.1"/>
</dbReference>
<dbReference type="GlyCosmos" id="Q86HV8">
    <property type="glycosylation" value="3 sites, No reported glycans"/>
</dbReference>
<dbReference type="GlyGen" id="Q86HV8">
    <property type="glycosylation" value="4 sites"/>
</dbReference>
<dbReference type="PaxDb" id="44689-DDB0220699"/>
<dbReference type="EnsemblProtists" id="EAL69193">
    <property type="protein sequence ID" value="EAL69193"/>
    <property type="gene ID" value="DDB_G0276479"/>
</dbReference>
<dbReference type="GeneID" id="8620541"/>
<dbReference type="KEGG" id="ddi:DDB_G0276479"/>
<dbReference type="dictyBase" id="DDB_G0276479">
    <property type="gene designation" value="ctnC"/>
</dbReference>
<dbReference type="VEuPathDB" id="AmoebaDB:DDB_G0276479"/>
<dbReference type="eggNOG" id="ENOG502S5J5">
    <property type="taxonomic scope" value="Eukaryota"/>
</dbReference>
<dbReference type="HOGENOM" id="CLU_095805_0_0_1"/>
<dbReference type="InParanoid" id="Q86HV8"/>
<dbReference type="OMA" id="FDISFEY"/>
<dbReference type="PhylomeDB" id="Q86HV8"/>
<dbReference type="Reactome" id="R-DDI-6798695">
    <property type="pathway name" value="Neutrophil degranulation"/>
</dbReference>
<dbReference type="Reactome" id="R-DDI-8964038">
    <property type="pathway name" value="LDL clearance"/>
</dbReference>
<dbReference type="PRO" id="PR:Q86HV8"/>
<dbReference type="Proteomes" id="UP000002195">
    <property type="component" value="Chromosome 2"/>
</dbReference>
<dbReference type="GO" id="GO:0005576">
    <property type="term" value="C:extracellular region"/>
    <property type="evidence" value="ECO:0007669"/>
    <property type="project" value="UniProtKB-SubCell"/>
</dbReference>
<dbReference type="GO" id="GO:0032934">
    <property type="term" value="F:sterol binding"/>
    <property type="evidence" value="ECO:0000318"/>
    <property type="project" value="GO_Central"/>
</dbReference>
<dbReference type="GO" id="GO:0015918">
    <property type="term" value="P:sterol transport"/>
    <property type="evidence" value="ECO:0000318"/>
    <property type="project" value="GO_Central"/>
</dbReference>
<dbReference type="InterPro" id="IPR008139">
    <property type="entry name" value="SaposinB_dom"/>
</dbReference>
<dbReference type="SMART" id="SM00741">
    <property type="entry name" value="SapB"/>
    <property type="match status" value="1"/>
</dbReference>
<dbReference type="PROSITE" id="PS50015">
    <property type="entry name" value="SAP_B"/>
    <property type="match status" value="1"/>
</dbReference>